<feature type="chain" id="PRO_0000192685" description="Uncharacterized sulfatase YidJ">
    <location>
        <begin position="1"/>
        <end position="497"/>
    </location>
</feature>
<feature type="active site" description="Nucleophile" evidence="2">
    <location>
        <position position="52"/>
    </location>
</feature>
<feature type="active site" evidence="2">
    <location>
        <position position="102"/>
    </location>
</feature>
<feature type="binding site" evidence="1">
    <location>
        <position position="12"/>
    </location>
    <ligand>
        <name>Ca(2+)</name>
        <dbReference type="ChEBI" id="CHEBI:29108"/>
    </ligand>
</feature>
<feature type="binding site" evidence="1">
    <location>
        <position position="13"/>
    </location>
    <ligand>
        <name>Ca(2+)</name>
        <dbReference type="ChEBI" id="CHEBI:29108"/>
    </ligand>
</feature>
<feature type="binding site" description="via 3-oxoalanine" evidence="1">
    <location>
        <position position="52"/>
    </location>
    <ligand>
        <name>Ca(2+)</name>
        <dbReference type="ChEBI" id="CHEBI:29108"/>
    </ligand>
</feature>
<feature type="binding site" evidence="1">
    <location>
        <position position="284"/>
    </location>
    <ligand>
        <name>Ca(2+)</name>
        <dbReference type="ChEBI" id="CHEBI:29108"/>
    </ligand>
</feature>
<feature type="binding site" evidence="1">
    <location>
        <position position="285"/>
    </location>
    <ligand>
        <name>Ca(2+)</name>
        <dbReference type="ChEBI" id="CHEBI:29108"/>
    </ligand>
</feature>
<feature type="modified residue" description="3-oxoalanine (Cys)" evidence="2">
    <location>
        <position position="52"/>
    </location>
</feature>
<protein>
    <recommendedName>
        <fullName>Uncharacterized sulfatase YidJ</fullName>
        <ecNumber>3.1.6.-</ecNumber>
    </recommendedName>
</protein>
<organism>
    <name type="scientific">Escherichia coli (strain K12)</name>
    <dbReference type="NCBI Taxonomy" id="83333"/>
    <lineage>
        <taxon>Bacteria</taxon>
        <taxon>Pseudomonadati</taxon>
        <taxon>Pseudomonadota</taxon>
        <taxon>Gammaproteobacteria</taxon>
        <taxon>Enterobacterales</taxon>
        <taxon>Enterobacteriaceae</taxon>
        <taxon>Escherichia</taxon>
    </lineage>
</organism>
<comment type="cofactor">
    <cofactor evidence="1">
        <name>Ca(2+)</name>
        <dbReference type="ChEBI" id="CHEBI:29108"/>
    </cofactor>
    <text evidence="1">Binds 1 Ca(2+) ion per subunit.</text>
</comment>
<comment type="PTM">
    <text evidence="1">The conversion to 3-oxoalanine (also known as C-formylglycine, FGly), of a serine or cysteine residue in prokaryotes and of a cysteine residue in eukaryotes, is critical for catalytic activity.</text>
</comment>
<comment type="similarity">
    <text evidence="3">Belongs to the sulfatase family.</text>
</comment>
<dbReference type="EC" id="3.1.6.-"/>
<dbReference type="EMBL" id="L10328">
    <property type="protein sequence ID" value="AAA62030.1"/>
    <property type="molecule type" value="Genomic_DNA"/>
</dbReference>
<dbReference type="EMBL" id="U00096">
    <property type="protein sequence ID" value="AAC76701.1"/>
    <property type="molecule type" value="Genomic_DNA"/>
</dbReference>
<dbReference type="EMBL" id="AP009048">
    <property type="protein sequence ID" value="BAE77615.1"/>
    <property type="molecule type" value="Genomic_DNA"/>
</dbReference>
<dbReference type="PIR" id="G65169">
    <property type="entry name" value="G65169"/>
</dbReference>
<dbReference type="RefSeq" id="NP_418134.1">
    <property type="nucleotide sequence ID" value="NC_000913.3"/>
</dbReference>
<dbReference type="RefSeq" id="WP_000828527.1">
    <property type="nucleotide sequence ID" value="NZ_SSZK01000035.1"/>
</dbReference>
<dbReference type="SMR" id="P31447"/>
<dbReference type="BioGRID" id="4261453">
    <property type="interactions" value="6"/>
</dbReference>
<dbReference type="FunCoup" id="P31447">
    <property type="interactions" value="318"/>
</dbReference>
<dbReference type="STRING" id="511145.b3678"/>
<dbReference type="PaxDb" id="511145-b3678"/>
<dbReference type="EnsemblBacteria" id="AAC76701">
    <property type="protein sequence ID" value="AAC76701"/>
    <property type="gene ID" value="b3678"/>
</dbReference>
<dbReference type="GeneID" id="948188"/>
<dbReference type="KEGG" id="ecj:JW3654"/>
<dbReference type="KEGG" id="eco:b3678"/>
<dbReference type="KEGG" id="ecoc:C3026_19945"/>
<dbReference type="PATRIC" id="fig|1411691.4.peg.3026"/>
<dbReference type="EchoBASE" id="EB1656"/>
<dbReference type="eggNOG" id="COG3119">
    <property type="taxonomic scope" value="Bacteria"/>
</dbReference>
<dbReference type="HOGENOM" id="CLU_006332_9_2_6"/>
<dbReference type="InParanoid" id="P31447"/>
<dbReference type="OMA" id="HVFTRAY"/>
<dbReference type="OrthoDB" id="9803751at2"/>
<dbReference type="PhylomeDB" id="P31447"/>
<dbReference type="BioCyc" id="EcoCyc:EG11705-MONOMER"/>
<dbReference type="PRO" id="PR:P31447"/>
<dbReference type="Proteomes" id="UP000000625">
    <property type="component" value="Chromosome"/>
</dbReference>
<dbReference type="GO" id="GO:0004065">
    <property type="term" value="F:arylsulfatase activity"/>
    <property type="evidence" value="ECO:0000318"/>
    <property type="project" value="GO_Central"/>
</dbReference>
<dbReference type="GO" id="GO:0046872">
    <property type="term" value="F:metal ion binding"/>
    <property type="evidence" value="ECO:0007669"/>
    <property type="project" value="UniProtKB-KW"/>
</dbReference>
<dbReference type="CDD" id="cd16156">
    <property type="entry name" value="sulfatase_like"/>
    <property type="match status" value="1"/>
</dbReference>
<dbReference type="Gene3D" id="3.40.720.10">
    <property type="entry name" value="Alkaline Phosphatase, subunit A"/>
    <property type="match status" value="1"/>
</dbReference>
<dbReference type="InterPro" id="IPR017850">
    <property type="entry name" value="Alkaline_phosphatase_core_sf"/>
</dbReference>
<dbReference type="InterPro" id="IPR024607">
    <property type="entry name" value="Sulfatase_CS"/>
</dbReference>
<dbReference type="InterPro" id="IPR000917">
    <property type="entry name" value="Sulfatase_N"/>
</dbReference>
<dbReference type="PANTHER" id="PTHR45953">
    <property type="entry name" value="IDURONATE 2-SULFATASE"/>
    <property type="match status" value="1"/>
</dbReference>
<dbReference type="PANTHER" id="PTHR45953:SF1">
    <property type="entry name" value="IDURONATE 2-SULFATASE"/>
    <property type="match status" value="1"/>
</dbReference>
<dbReference type="Pfam" id="PF00884">
    <property type="entry name" value="Sulfatase"/>
    <property type="match status" value="1"/>
</dbReference>
<dbReference type="SUPFAM" id="SSF53649">
    <property type="entry name" value="Alkaline phosphatase-like"/>
    <property type="match status" value="1"/>
</dbReference>
<dbReference type="PROSITE" id="PS00523">
    <property type="entry name" value="SULFATASE_1"/>
    <property type="match status" value="1"/>
</dbReference>
<dbReference type="PROSITE" id="PS00149">
    <property type="entry name" value="SULFATASE_2"/>
    <property type="match status" value="1"/>
</dbReference>
<gene>
    <name type="primary">yidJ</name>
    <name type="ordered locus">b3678</name>
    <name type="ordered locus">JW3654</name>
</gene>
<keyword id="KW-0106">Calcium</keyword>
<keyword id="KW-0378">Hydrolase</keyword>
<keyword id="KW-0479">Metal-binding</keyword>
<keyword id="KW-1185">Reference proteome</keyword>
<sequence>MKRPNFLFVMTDTQATNMVGCYSGKPLNTQNIDSLAAEGIRFNSAYTCSPVCTPARAGLFTGIYANQSGPWTNNVAPGKNISTMGRYFKDAGYHTCYIGKWHLDGHDYFGTGECPPEWDADYWFDGANYLSELTEKEISLWRNGLNSVEDLQANHIDETFTWAHRISNRAVDFLQQPARADEPFLMVVSYDEPHHPFTCPVEYLEKYADFYYELGEKAQDDLANKPEHHRLWAQAMPSPVGDDGLYHHPLYFACNDFVDDQIGRVINALTPEQRENTWVIYTSDHGEMMGAHKLISKGAAMYDDITRIPLIIRSPQGERRQVDTPVSHIDLLPTMMALADIEKPEILPGENILAVKEPRGVMVEFNRYEIEHDSFGGFIPVRCWVTDDFKLVLNLFTSDELYDRRNDPNEMHNLIDDIRFADVRSKMHDALLDYMDKIRDPFRSYQWSLRPWRKDARPRWMGAFRPRPQDGYSPVVRDYDTGLPTQGVKVEEKKQKF</sequence>
<accession>P31447</accession>
<accession>Q2M7Z1</accession>
<evidence type="ECO:0000250" key="1"/>
<evidence type="ECO:0000250" key="2">
    <source>
        <dbReference type="UniProtKB" id="P15289"/>
    </source>
</evidence>
<evidence type="ECO:0000305" key="3"/>
<proteinExistence type="inferred from homology"/>
<reference key="1">
    <citation type="journal article" date="1993" name="Genomics">
        <title>DNA sequence and analysis of 136 kilobases of the Escherichia coli genome: organizational symmetry around the origin of replication.</title>
        <authorList>
            <person name="Burland V.D."/>
            <person name="Plunkett G. III"/>
            <person name="Daniels D.L."/>
            <person name="Blattner F.R."/>
        </authorList>
    </citation>
    <scope>NUCLEOTIDE SEQUENCE [LARGE SCALE GENOMIC DNA]</scope>
    <source>
        <strain>K12 / MG1655 / ATCC 47076</strain>
    </source>
</reference>
<reference key="2">
    <citation type="journal article" date="1997" name="Science">
        <title>The complete genome sequence of Escherichia coli K-12.</title>
        <authorList>
            <person name="Blattner F.R."/>
            <person name="Plunkett G. III"/>
            <person name="Bloch C.A."/>
            <person name="Perna N.T."/>
            <person name="Burland V."/>
            <person name="Riley M."/>
            <person name="Collado-Vides J."/>
            <person name="Glasner J.D."/>
            <person name="Rode C.K."/>
            <person name="Mayhew G.F."/>
            <person name="Gregor J."/>
            <person name="Davis N.W."/>
            <person name="Kirkpatrick H.A."/>
            <person name="Goeden M.A."/>
            <person name="Rose D.J."/>
            <person name="Mau B."/>
            <person name="Shao Y."/>
        </authorList>
    </citation>
    <scope>NUCLEOTIDE SEQUENCE [LARGE SCALE GENOMIC DNA]</scope>
    <source>
        <strain>K12 / MG1655 / ATCC 47076</strain>
    </source>
</reference>
<reference key="3">
    <citation type="journal article" date="2006" name="Mol. Syst. Biol.">
        <title>Highly accurate genome sequences of Escherichia coli K-12 strains MG1655 and W3110.</title>
        <authorList>
            <person name="Hayashi K."/>
            <person name="Morooka N."/>
            <person name="Yamamoto Y."/>
            <person name="Fujita K."/>
            <person name="Isono K."/>
            <person name="Choi S."/>
            <person name="Ohtsubo E."/>
            <person name="Baba T."/>
            <person name="Wanner B.L."/>
            <person name="Mori H."/>
            <person name="Horiuchi T."/>
        </authorList>
    </citation>
    <scope>NUCLEOTIDE SEQUENCE [LARGE SCALE GENOMIC DNA]</scope>
    <source>
        <strain>K12 / W3110 / ATCC 27325 / DSM 5911</strain>
    </source>
</reference>
<name>YIDJ_ECOLI</name>